<dbReference type="EMBL" id="CP000681">
    <property type="protein sequence ID" value="ABP76932.1"/>
    <property type="molecule type" value="Genomic_DNA"/>
</dbReference>
<dbReference type="SMR" id="A4YAE9"/>
<dbReference type="STRING" id="319224.Sputcn32_3220"/>
<dbReference type="KEGG" id="spc:Sputcn32_3220"/>
<dbReference type="eggNOG" id="COG1438">
    <property type="taxonomic scope" value="Bacteria"/>
</dbReference>
<dbReference type="HOGENOM" id="CLU_097103_2_0_6"/>
<dbReference type="UniPathway" id="UPA00068"/>
<dbReference type="GO" id="GO:0005737">
    <property type="term" value="C:cytoplasm"/>
    <property type="evidence" value="ECO:0007669"/>
    <property type="project" value="UniProtKB-SubCell"/>
</dbReference>
<dbReference type="GO" id="GO:0034618">
    <property type="term" value="F:arginine binding"/>
    <property type="evidence" value="ECO:0007669"/>
    <property type="project" value="InterPro"/>
</dbReference>
<dbReference type="GO" id="GO:0003677">
    <property type="term" value="F:DNA binding"/>
    <property type="evidence" value="ECO:0007669"/>
    <property type="project" value="UniProtKB-KW"/>
</dbReference>
<dbReference type="GO" id="GO:0003700">
    <property type="term" value="F:DNA-binding transcription factor activity"/>
    <property type="evidence" value="ECO:0007669"/>
    <property type="project" value="UniProtKB-UniRule"/>
</dbReference>
<dbReference type="GO" id="GO:0006526">
    <property type="term" value="P:L-arginine biosynthetic process"/>
    <property type="evidence" value="ECO:0007669"/>
    <property type="project" value="UniProtKB-UniPathway"/>
</dbReference>
<dbReference type="GO" id="GO:0051259">
    <property type="term" value="P:protein complex oligomerization"/>
    <property type="evidence" value="ECO:0007669"/>
    <property type="project" value="InterPro"/>
</dbReference>
<dbReference type="GO" id="GO:1900079">
    <property type="term" value="P:regulation of arginine biosynthetic process"/>
    <property type="evidence" value="ECO:0007669"/>
    <property type="project" value="UniProtKB-UniRule"/>
</dbReference>
<dbReference type="Gene3D" id="3.30.1360.40">
    <property type="match status" value="1"/>
</dbReference>
<dbReference type="Gene3D" id="1.10.10.10">
    <property type="entry name" value="Winged helix-like DNA-binding domain superfamily/Winged helix DNA-binding domain"/>
    <property type="match status" value="1"/>
</dbReference>
<dbReference type="HAMAP" id="MF_00173">
    <property type="entry name" value="Arg_repressor"/>
    <property type="match status" value="1"/>
</dbReference>
<dbReference type="InterPro" id="IPR001669">
    <property type="entry name" value="Arg_repress"/>
</dbReference>
<dbReference type="InterPro" id="IPR020899">
    <property type="entry name" value="Arg_repress_C"/>
</dbReference>
<dbReference type="InterPro" id="IPR036251">
    <property type="entry name" value="Arg_repress_C_sf"/>
</dbReference>
<dbReference type="InterPro" id="IPR020900">
    <property type="entry name" value="Arg_repress_DNA-bd"/>
</dbReference>
<dbReference type="InterPro" id="IPR036388">
    <property type="entry name" value="WH-like_DNA-bd_sf"/>
</dbReference>
<dbReference type="InterPro" id="IPR036390">
    <property type="entry name" value="WH_DNA-bd_sf"/>
</dbReference>
<dbReference type="NCBIfam" id="TIGR01529">
    <property type="entry name" value="argR_whole"/>
    <property type="match status" value="1"/>
</dbReference>
<dbReference type="NCBIfam" id="NF003457">
    <property type="entry name" value="PRK05066.1"/>
    <property type="match status" value="1"/>
</dbReference>
<dbReference type="PANTHER" id="PTHR34471">
    <property type="entry name" value="ARGININE REPRESSOR"/>
    <property type="match status" value="1"/>
</dbReference>
<dbReference type="PANTHER" id="PTHR34471:SF1">
    <property type="entry name" value="ARGININE REPRESSOR"/>
    <property type="match status" value="1"/>
</dbReference>
<dbReference type="Pfam" id="PF01316">
    <property type="entry name" value="Arg_repressor"/>
    <property type="match status" value="1"/>
</dbReference>
<dbReference type="Pfam" id="PF02863">
    <property type="entry name" value="Arg_repressor_C"/>
    <property type="match status" value="1"/>
</dbReference>
<dbReference type="PRINTS" id="PR01467">
    <property type="entry name" value="ARGREPRESSOR"/>
</dbReference>
<dbReference type="SUPFAM" id="SSF55252">
    <property type="entry name" value="C-terminal domain of arginine repressor"/>
    <property type="match status" value="1"/>
</dbReference>
<dbReference type="SUPFAM" id="SSF46785">
    <property type="entry name" value="Winged helix' DNA-binding domain"/>
    <property type="match status" value="1"/>
</dbReference>
<sequence length="156" mass="16925">MQTTKNQDDLVRIFKSILKEERFGSQSEIVAALQAEGFGNINQSKVSRMLSKFGAVRTRNAKQEMVYCLPAELGVPTAGSPLKNLVLDVDHNQAMIVVRTSPGAAQLIARLLDSIGKPEGILGTIAGDDTIFICPSSIQDIADTLETIKSLFNYAE</sequence>
<proteinExistence type="inferred from homology"/>
<name>ARGR_SHEPC</name>
<reference key="1">
    <citation type="submission" date="2007-04" db="EMBL/GenBank/DDBJ databases">
        <title>Complete sequence of Shewanella putrefaciens CN-32.</title>
        <authorList>
            <consortium name="US DOE Joint Genome Institute"/>
            <person name="Copeland A."/>
            <person name="Lucas S."/>
            <person name="Lapidus A."/>
            <person name="Barry K."/>
            <person name="Detter J.C."/>
            <person name="Glavina del Rio T."/>
            <person name="Hammon N."/>
            <person name="Israni S."/>
            <person name="Dalin E."/>
            <person name="Tice H."/>
            <person name="Pitluck S."/>
            <person name="Chain P."/>
            <person name="Malfatti S."/>
            <person name="Shin M."/>
            <person name="Vergez L."/>
            <person name="Schmutz J."/>
            <person name="Larimer F."/>
            <person name="Land M."/>
            <person name="Hauser L."/>
            <person name="Kyrpides N."/>
            <person name="Mikhailova N."/>
            <person name="Romine M.F."/>
            <person name="Fredrickson J."/>
            <person name="Tiedje J."/>
            <person name="Richardson P."/>
        </authorList>
    </citation>
    <scope>NUCLEOTIDE SEQUENCE [LARGE SCALE GENOMIC DNA]</scope>
    <source>
        <strain>CN-32 / ATCC BAA-453</strain>
    </source>
</reference>
<comment type="function">
    <text evidence="1">Regulates arginine biosynthesis genes.</text>
</comment>
<comment type="pathway">
    <text>Amino-acid biosynthesis; L-arginine biosynthesis [regulation].</text>
</comment>
<comment type="subcellular location">
    <subcellularLocation>
        <location evidence="1">Cytoplasm</location>
    </subcellularLocation>
</comment>
<comment type="similarity">
    <text evidence="1">Belongs to the ArgR family.</text>
</comment>
<organism>
    <name type="scientific">Shewanella putrefaciens (strain CN-32 / ATCC BAA-453)</name>
    <dbReference type="NCBI Taxonomy" id="319224"/>
    <lineage>
        <taxon>Bacteria</taxon>
        <taxon>Pseudomonadati</taxon>
        <taxon>Pseudomonadota</taxon>
        <taxon>Gammaproteobacteria</taxon>
        <taxon>Alteromonadales</taxon>
        <taxon>Shewanellaceae</taxon>
        <taxon>Shewanella</taxon>
    </lineage>
</organism>
<gene>
    <name evidence="1" type="primary">argR</name>
    <name type="ordered locus">Sputcn32_3220</name>
</gene>
<protein>
    <recommendedName>
        <fullName evidence="1">Arginine repressor</fullName>
    </recommendedName>
</protein>
<evidence type="ECO:0000255" key="1">
    <source>
        <dbReference type="HAMAP-Rule" id="MF_00173"/>
    </source>
</evidence>
<accession>A4YAE9</accession>
<keyword id="KW-0028">Amino-acid biosynthesis</keyword>
<keyword id="KW-0055">Arginine biosynthesis</keyword>
<keyword id="KW-0963">Cytoplasm</keyword>
<keyword id="KW-0238">DNA-binding</keyword>
<keyword id="KW-0678">Repressor</keyword>
<keyword id="KW-0804">Transcription</keyword>
<keyword id="KW-0805">Transcription regulation</keyword>
<feature type="chain" id="PRO_1000023592" description="Arginine repressor">
    <location>
        <begin position="1"/>
        <end position="156"/>
    </location>
</feature>